<organism>
    <name type="scientific">Acidobacterium capsulatum (strain ATCC 51196 / DSM 11244 / BCRC 80197 / JCM 7670 / NBRC 15755 / NCIMB 13165 / 161)</name>
    <dbReference type="NCBI Taxonomy" id="240015"/>
    <lineage>
        <taxon>Bacteria</taxon>
        <taxon>Pseudomonadati</taxon>
        <taxon>Acidobacteriota</taxon>
        <taxon>Terriglobia</taxon>
        <taxon>Terriglobales</taxon>
        <taxon>Acidobacteriaceae</taxon>
        <taxon>Acidobacterium</taxon>
    </lineage>
</organism>
<protein>
    <recommendedName>
        <fullName evidence="1">DNA mismatch repair protein MutL</fullName>
    </recommendedName>
</protein>
<evidence type="ECO:0000255" key="1">
    <source>
        <dbReference type="HAMAP-Rule" id="MF_00149"/>
    </source>
</evidence>
<proteinExistence type="inferred from homology"/>
<sequence length="665" mass="72914">MGRIRVLSDQVANQIAAGEVVDRPASVVKELLENAIDAEATRIRVEVEAGGRKLIRVTDNGIGMMRDDAMLAFERHATSKIRSSDDLLTIATLGFRGEALPSIASISRLEMITRAQGEETGTCIEIAGGKMLRVEDAGAPPGTSFTIRDLFYNTPARRKFLKAESTELSHVSALVTHYALAHPDKHFELHSATHALLNAPPVNEPSERVFQIFGAETLNQLIPMAAERPFDRAGLPEPPPWRRDQDYEPPDPGFLRVKGFISKPALQKLNRNSIYIFINRRLVRDRLILHAITEGYRNIIPPTSFPVALLFLEMPPHEVDVNVHPAKTEVRFRQSSVLHDFLRDSIRNALMKARPAADFLAALSASEPVSSVLPTATPVQDSEVIPAGSEAAGEVAAFALTEPVLPSVEQPLPFARAEMTVPQVQGAAGSAPAPPAYPAVAGAAARVPGGNCGHDAGPEEIPPPGGEAGTLASLASLKPLGQLRESFILAVNDEGFWIIDQHVAHERVLFEKILREREVERVHRQRLLMPLLLDLLPHQMVRFAEIAQELERNGFEAEPFGPHTIAIKASPVGLEGARLERMLVEVLEQTGTGTQSENLETVRTRIAASIACHSAIKINTPLDPQRMEWLLAELARTAHPTSCPHGRPIALRYSWKDIQRAFERI</sequence>
<accession>C1F876</accession>
<name>MUTL_ACIC5</name>
<reference key="1">
    <citation type="journal article" date="2009" name="Appl. Environ. Microbiol.">
        <title>Three genomes from the phylum Acidobacteria provide insight into the lifestyles of these microorganisms in soils.</title>
        <authorList>
            <person name="Ward N.L."/>
            <person name="Challacombe J.F."/>
            <person name="Janssen P.H."/>
            <person name="Henrissat B."/>
            <person name="Coutinho P.M."/>
            <person name="Wu M."/>
            <person name="Xie G."/>
            <person name="Haft D.H."/>
            <person name="Sait M."/>
            <person name="Badger J."/>
            <person name="Barabote R.D."/>
            <person name="Bradley B."/>
            <person name="Brettin T.S."/>
            <person name="Brinkac L.M."/>
            <person name="Bruce D."/>
            <person name="Creasy T."/>
            <person name="Daugherty S.C."/>
            <person name="Davidsen T.M."/>
            <person name="DeBoy R.T."/>
            <person name="Detter J.C."/>
            <person name="Dodson R.J."/>
            <person name="Durkin A.S."/>
            <person name="Ganapathy A."/>
            <person name="Gwinn-Giglio M."/>
            <person name="Han C.S."/>
            <person name="Khouri H."/>
            <person name="Kiss H."/>
            <person name="Kothari S.P."/>
            <person name="Madupu R."/>
            <person name="Nelson K.E."/>
            <person name="Nelson W.C."/>
            <person name="Paulsen I."/>
            <person name="Penn K."/>
            <person name="Ren Q."/>
            <person name="Rosovitz M.J."/>
            <person name="Selengut J.D."/>
            <person name="Shrivastava S."/>
            <person name="Sullivan S.A."/>
            <person name="Tapia R."/>
            <person name="Thompson L.S."/>
            <person name="Watkins K.L."/>
            <person name="Yang Q."/>
            <person name="Yu C."/>
            <person name="Zafar N."/>
            <person name="Zhou L."/>
            <person name="Kuske C.R."/>
        </authorList>
    </citation>
    <scope>NUCLEOTIDE SEQUENCE [LARGE SCALE GENOMIC DNA]</scope>
    <source>
        <strain>ATCC 51196 / DSM 11244 / BCRC 80197 / JCM 7670 / NBRC 15755 / NCIMB 13165 / 161</strain>
    </source>
</reference>
<feature type="chain" id="PRO_1000192149" description="DNA mismatch repair protein MutL">
    <location>
        <begin position="1"/>
        <end position="665"/>
    </location>
</feature>
<gene>
    <name evidence="1" type="primary">mutL</name>
    <name type="ordered locus">ACP_1883</name>
</gene>
<keyword id="KW-0227">DNA damage</keyword>
<keyword id="KW-0234">DNA repair</keyword>
<keyword id="KW-1185">Reference proteome</keyword>
<comment type="function">
    <text evidence="1">This protein is involved in the repair of mismatches in DNA. It is required for dam-dependent methyl-directed DNA mismatch repair. May act as a 'molecular matchmaker', a protein that promotes the formation of a stable complex between two or more DNA-binding proteins in an ATP-dependent manner without itself being part of a final effector complex.</text>
</comment>
<comment type="similarity">
    <text evidence="1">Belongs to the DNA mismatch repair MutL/HexB family.</text>
</comment>
<dbReference type="EMBL" id="CP001472">
    <property type="protein sequence ID" value="ACO34166.1"/>
    <property type="molecule type" value="Genomic_DNA"/>
</dbReference>
<dbReference type="RefSeq" id="WP_015896998.1">
    <property type="nucleotide sequence ID" value="NC_012483.1"/>
</dbReference>
<dbReference type="SMR" id="C1F876"/>
<dbReference type="FunCoup" id="C1F876">
    <property type="interactions" value="248"/>
</dbReference>
<dbReference type="STRING" id="240015.ACP_1883"/>
<dbReference type="KEGG" id="aca:ACP_1883"/>
<dbReference type="eggNOG" id="COG0323">
    <property type="taxonomic scope" value="Bacteria"/>
</dbReference>
<dbReference type="HOGENOM" id="CLU_004131_4_2_0"/>
<dbReference type="InParanoid" id="C1F876"/>
<dbReference type="OrthoDB" id="9763467at2"/>
<dbReference type="Proteomes" id="UP000002207">
    <property type="component" value="Chromosome"/>
</dbReference>
<dbReference type="GO" id="GO:0032300">
    <property type="term" value="C:mismatch repair complex"/>
    <property type="evidence" value="ECO:0007669"/>
    <property type="project" value="InterPro"/>
</dbReference>
<dbReference type="GO" id="GO:0005524">
    <property type="term" value="F:ATP binding"/>
    <property type="evidence" value="ECO:0007669"/>
    <property type="project" value="InterPro"/>
</dbReference>
<dbReference type="GO" id="GO:0016887">
    <property type="term" value="F:ATP hydrolysis activity"/>
    <property type="evidence" value="ECO:0007669"/>
    <property type="project" value="InterPro"/>
</dbReference>
<dbReference type="GO" id="GO:0140664">
    <property type="term" value="F:ATP-dependent DNA damage sensor activity"/>
    <property type="evidence" value="ECO:0007669"/>
    <property type="project" value="InterPro"/>
</dbReference>
<dbReference type="GO" id="GO:0030983">
    <property type="term" value="F:mismatched DNA binding"/>
    <property type="evidence" value="ECO:0007669"/>
    <property type="project" value="InterPro"/>
</dbReference>
<dbReference type="GO" id="GO:0006298">
    <property type="term" value="P:mismatch repair"/>
    <property type="evidence" value="ECO:0007669"/>
    <property type="project" value="UniProtKB-UniRule"/>
</dbReference>
<dbReference type="CDD" id="cd16926">
    <property type="entry name" value="HATPase_MutL-MLH-PMS-like"/>
    <property type="match status" value="1"/>
</dbReference>
<dbReference type="CDD" id="cd00782">
    <property type="entry name" value="MutL_Trans"/>
    <property type="match status" value="1"/>
</dbReference>
<dbReference type="FunFam" id="3.30.565.10:FF:000003">
    <property type="entry name" value="DNA mismatch repair endonuclease MutL"/>
    <property type="match status" value="1"/>
</dbReference>
<dbReference type="Gene3D" id="3.30.230.10">
    <property type="match status" value="1"/>
</dbReference>
<dbReference type="Gene3D" id="3.30.565.10">
    <property type="entry name" value="Histidine kinase-like ATPase, C-terminal domain"/>
    <property type="match status" value="1"/>
</dbReference>
<dbReference type="Gene3D" id="3.30.1540.20">
    <property type="entry name" value="MutL, C-terminal domain, dimerisation subdomain"/>
    <property type="match status" value="1"/>
</dbReference>
<dbReference type="Gene3D" id="3.30.1370.100">
    <property type="entry name" value="MutL, C-terminal domain, regulatory subdomain"/>
    <property type="match status" value="1"/>
</dbReference>
<dbReference type="HAMAP" id="MF_00149">
    <property type="entry name" value="DNA_mis_repair"/>
    <property type="match status" value="1"/>
</dbReference>
<dbReference type="InterPro" id="IPR014762">
    <property type="entry name" value="DNA_mismatch_repair_CS"/>
</dbReference>
<dbReference type="InterPro" id="IPR020667">
    <property type="entry name" value="DNA_mismatch_repair_MutL"/>
</dbReference>
<dbReference type="InterPro" id="IPR013507">
    <property type="entry name" value="DNA_mismatch_S5_2-like"/>
</dbReference>
<dbReference type="InterPro" id="IPR036890">
    <property type="entry name" value="HATPase_C_sf"/>
</dbReference>
<dbReference type="InterPro" id="IPR002099">
    <property type="entry name" value="MutL/Mlh/PMS"/>
</dbReference>
<dbReference type="InterPro" id="IPR038973">
    <property type="entry name" value="MutL/Mlh/Pms-like"/>
</dbReference>
<dbReference type="InterPro" id="IPR014790">
    <property type="entry name" value="MutL_C"/>
</dbReference>
<dbReference type="InterPro" id="IPR042120">
    <property type="entry name" value="MutL_C_dimsub"/>
</dbReference>
<dbReference type="InterPro" id="IPR042121">
    <property type="entry name" value="MutL_C_regsub"/>
</dbReference>
<dbReference type="InterPro" id="IPR037198">
    <property type="entry name" value="MutL_C_sf"/>
</dbReference>
<dbReference type="InterPro" id="IPR020568">
    <property type="entry name" value="Ribosomal_Su5_D2-typ_SF"/>
</dbReference>
<dbReference type="InterPro" id="IPR014721">
    <property type="entry name" value="Ribsml_uS5_D2-typ_fold_subgr"/>
</dbReference>
<dbReference type="NCBIfam" id="TIGR00585">
    <property type="entry name" value="mutl"/>
    <property type="match status" value="1"/>
</dbReference>
<dbReference type="PANTHER" id="PTHR10073">
    <property type="entry name" value="DNA MISMATCH REPAIR PROTEIN MLH, PMS, MUTL"/>
    <property type="match status" value="1"/>
</dbReference>
<dbReference type="PANTHER" id="PTHR10073:SF12">
    <property type="entry name" value="DNA MISMATCH REPAIR PROTEIN MLH1"/>
    <property type="match status" value="1"/>
</dbReference>
<dbReference type="Pfam" id="PF01119">
    <property type="entry name" value="DNA_mis_repair"/>
    <property type="match status" value="1"/>
</dbReference>
<dbReference type="Pfam" id="PF13589">
    <property type="entry name" value="HATPase_c_3"/>
    <property type="match status" value="1"/>
</dbReference>
<dbReference type="Pfam" id="PF08676">
    <property type="entry name" value="MutL_C"/>
    <property type="match status" value="1"/>
</dbReference>
<dbReference type="SMART" id="SM01340">
    <property type="entry name" value="DNA_mis_repair"/>
    <property type="match status" value="1"/>
</dbReference>
<dbReference type="SMART" id="SM00853">
    <property type="entry name" value="MutL_C"/>
    <property type="match status" value="1"/>
</dbReference>
<dbReference type="SUPFAM" id="SSF55874">
    <property type="entry name" value="ATPase domain of HSP90 chaperone/DNA topoisomerase II/histidine kinase"/>
    <property type="match status" value="1"/>
</dbReference>
<dbReference type="SUPFAM" id="SSF118116">
    <property type="entry name" value="DNA mismatch repair protein MutL"/>
    <property type="match status" value="1"/>
</dbReference>
<dbReference type="SUPFAM" id="SSF54211">
    <property type="entry name" value="Ribosomal protein S5 domain 2-like"/>
    <property type="match status" value="1"/>
</dbReference>
<dbReference type="PROSITE" id="PS00058">
    <property type="entry name" value="DNA_MISMATCH_REPAIR_1"/>
    <property type="match status" value="1"/>
</dbReference>